<comment type="function">
    <text evidence="1">Required for rescue of stalled ribosomes mediated by trans-translation. Binds to transfer-messenger RNA (tmRNA), required for stable association of tmRNA with ribosomes. tmRNA and SmpB together mimic tRNA shape, replacing the anticodon stem-loop with SmpB. tmRNA is encoded by the ssrA gene; the 2 termini fold to resemble tRNA(Ala) and it encodes a 'tag peptide', a short internal open reading frame. During trans-translation Ala-aminoacylated tmRNA acts like a tRNA, entering the A-site of stalled ribosomes, displacing the stalled mRNA. The ribosome then switches to translate the ORF on the tmRNA; the nascent peptide is terminated with the 'tag peptide' encoded by the tmRNA and targeted for degradation. The ribosome is freed to recommence translation, which seems to be the essential function of trans-translation.</text>
</comment>
<comment type="subcellular location">
    <subcellularLocation>
        <location evidence="1">Cytoplasm</location>
    </subcellularLocation>
    <text evidence="1">The tmRNA-SmpB complex associates with stalled 70S ribosomes.</text>
</comment>
<comment type="similarity">
    <text evidence="1">Belongs to the SmpB family.</text>
</comment>
<evidence type="ECO:0000255" key="1">
    <source>
        <dbReference type="HAMAP-Rule" id="MF_00023"/>
    </source>
</evidence>
<evidence type="ECO:0000256" key="2">
    <source>
        <dbReference type="SAM" id="MobiDB-lite"/>
    </source>
</evidence>
<protein>
    <recommendedName>
        <fullName evidence="1">SsrA-binding protein</fullName>
    </recommendedName>
    <alternativeName>
        <fullName evidence="1">Small protein B</fullName>
    </alternativeName>
</protein>
<feature type="chain" id="PRO_1000002017" description="SsrA-binding protein">
    <location>
        <begin position="1"/>
        <end position="148"/>
    </location>
</feature>
<feature type="region of interest" description="Disordered" evidence="2">
    <location>
        <begin position="123"/>
        <end position="148"/>
    </location>
</feature>
<feature type="compositionally biased region" description="Basic and acidic residues" evidence="2">
    <location>
        <begin position="126"/>
        <end position="142"/>
    </location>
</feature>
<proteinExistence type="inferred from homology"/>
<keyword id="KW-0963">Cytoplasm</keyword>
<keyword id="KW-0694">RNA-binding</keyword>
<gene>
    <name evidence="1" type="primary">smpB</name>
    <name type="ordered locus">BURPS1710b_2558</name>
</gene>
<reference key="1">
    <citation type="journal article" date="2010" name="Genome Biol. Evol.">
        <title>Continuing evolution of Burkholderia mallei through genome reduction and large-scale rearrangements.</title>
        <authorList>
            <person name="Losada L."/>
            <person name="Ronning C.M."/>
            <person name="DeShazer D."/>
            <person name="Woods D."/>
            <person name="Fedorova N."/>
            <person name="Kim H.S."/>
            <person name="Shabalina S.A."/>
            <person name="Pearson T.R."/>
            <person name="Brinkac L."/>
            <person name="Tan P."/>
            <person name="Nandi T."/>
            <person name="Crabtree J."/>
            <person name="Badger J."/>
            <person name="Beckstrom-Sternberg S."/>
            <person name="Saqib M."/>
            <person name="Schutzer S.E."/>
            <person name="Keim P."/>
            <person name="Nierman W.C."/>
        </authorList>
    </citation>
    <scope>NUCLEOTIDE SEQUENCE [LARGE SCALE GENOMIC DNA]</scope>
    <source>
        <strain>1710b</strain>
    </source>
</reference>
<accession>Q3JR53</accession>
<dbReference type="EMBL" id="CP000124">
    <property type="protein sequence ID" value="ABA49956.1"/>
    <property type="molecule type" value="Genomic_DNA"/>
</dbReference>
<dbReference type="RefSeq" id="WP_004197080.1">
    <property type="nucleotide sequence ID" value="NC_007434.1"/>
</dbReference>
<dbReference type="SMR" id="Q3JR53"/>
<dbReference type="EnsemblBacteria" id="ABA49956">
    <property type="protein sequence ID" value="ABA49956"/>
    <property type="gene ID" value="BURPS1710b_2558"/>
</dbReference>
<dbReference type="GeneID" id="93060677"/>
<dbReference type="KEGG" id="bpm:BURPS1710b_2558"/>
<dbReference type="HOGENOM" id="CLU_108953_3_0_4"/>
<dbReference type="Proteomes" id="UP000002700">
    <property type="component" value="Chromosome I"/>
</dbReference>
<dbReference type="GO" id="GO:0005829">
    <property type="term" value="C:cytosol"/>
    <property type="evidence" value="ECO:0007669"/>
    <property type="project" value="TreeGrafter"/>
</dbReference>
<dbReference type="GO" id="GO:0003723">
    <property type="term" value="F:RNA binding"/>
    <property type="evidence" value="ECO:0007669"/>
    <property type="project" value="UniProtKB-UniRule"/>
</dbReference>
<dbReference type="GO" id="GO:0070929">
    <property type="term" value="P:trans-translation"/>
    <property type="evidence" value="ECO:0007669"/>
    <property type="project" value="UniProtKB-UniRule"/>
</dbReference>
<dbReference type="CDD" id="cd09294">
    <property type="entry name" value="SmpB"/>
    <property type="match status" value="1"/>
</dbReference>
<dbReference type="Gene3D" id="2.40.280.10">
    <property type="match status" value="1"/>
</dbReference>
<dbReference type="HAMAP" id="MF_00023">
    <property type="entry name" value="SmpB"/>
    <property type="match status" value="1"/>
</dbReference>
<dbReference type="InterPro" id="IPR023620">
    <property type="entry name" value="SmpB"/>
</dbReference>
<dbReference type="InterPro" id="IPR000037">
    <property type="entry name" value="SsrA-bd_prot"/>
</dbReference>
<dbReference type="InterPro" id="IPR020081">
    <property type="entry name" value="SsrA-bd_prot_CS"/>
</dbReference>
<dbReference type="NCBIfam" id="NF003843">
    <property type="entry name" value="PRK05422.1"/>
    <property type="match status" value="1"/>
</dbReference>
<dbReference type="NCBIfam" id="TIGR00086">
    <property type="entry name" value="smpB"/>
    <property type="match status" value="1"/>
</dbReference>
<dbReference type="PANTHER" id="PTHR30308:SF2">
    <property type="entry name" value="SSRA-BINDING PROTEIN"/>
    <property type="match status" value="1"/>
</dbReference>
<dbReference type="PANTHER" id="PTHR30308">
    <property type="entry name" value="TMRNA-BINDING COMPONENT OF TRANS-TRANSLATION TAGGING COMPLEX"/>
    <property type="match status" value="1"/>
</dbReference>
<dbReference type="Pfam" id="PF01668">
    <property type="entry name" value="SmpB"/>
    <property type="match status" value="1"/>
</dbReference>
<dbReference type="SUPFAM" id="SSF74982">
    <property type="entry name" value="Small protein B (SmpB)"/>
    <property type="match status" value="1"/>
</dbReference>
<dbReference type="PROSITE" id="PS01317">
    <property type="entry name" value="SSRP"/>
    <property type="match status" value="1"/>
</dbReference>
<sequence length="148" mass="17212">MSIIDNRKAFFDYHIEERYEAGLVLEGWEVKALRAGRGQIKEGYVVVKHAEIFLIGTHISPLPEASTHIKPDPVRTRKLLLHRDEIKKLIGKVEQRGYTLVPLNFHYKGGRVKCEIGLAKGKKLHDKRETEKKRDWEREKARIMRSAT</sequence>
<organism>
    <name type="scientific">Burkholderia pseudomallei (strain 1710b)</name>
    <dbReference type="NCBI Taxonomy" id="320372"/>
    <lineage>
        <taxon>Bacteria</taxon>
        <taxon>Pseudomonadati</taxon>
        <taxon>Pseudomonadota</taxon>
        <taxon>Betaproteobacteria</taxon>
        <taxon>Burkholderiales</taxon>
        <taxon>Burkholderiaceae</taxon>
        <taxon>Burkholderia</taxon>
        <taxon>pseudomallei group</taxon>
    </lineage>
</organism>
<name>SSRP_BURP1</name>